<evidence type="ECO:0000250" key="1">
    <source>
        <dbReference type="UniProtKB" id="P84808"/>
    </source>
</evidence>
<evidence type="ECO:0000250" key="2">
    <source>
        <dbReference type="UniProtKB" id="Q8JI40"/>
    </source>
</evidence>
<evidence type="ECO:0000255" key="3"/>
<evidence type="ECO:0000269" key="4">
    <source>
    </source>
</evidence>
<evidence type="ECO:0000303" key="5">
    <source>
    </source>
</evidence>
<evidence type="ECO:0000305" key="6"/>
<keyword id="KW-0108">Calcium channel impairing toxin</keyword>
<keyword id="KW-0903">Direct protein sequencing</keyword>
<keyword id="KW-1015">Disulfide bond</keyword>
<keyword id="KW-0872">Ion channel impairing toxin</keyword>
<keyword id="KW-0528">Neurotoxin</keyword>
<keyword id="KW-0964">Secreted</keyword>
<keyword id="KW-0800">Toxin</keyword>
<comment type="function">
    <text evidence="2">Blocks contraction of smooth muscle elicited by high potassium-induced depolarization, but does not block caffeine-stimulated contraction. May target voltage-gated calcium channels on smooth muscle (By similarity).</text>
</comment>
<comment type="subcellular location">
    <subcellularLocation>
        <location evidence="4">Secreted</location>
    </subcellularLocation>
</comment>
<comment type="tissue specificity">
    <text evidence="4">Expressed by the venom gland.</text>
</comment>
<comment type="PTM">
    <text evidence="1">Contains 8 disulfide bonds.</text>
</comment>
<comment type="similarity">
    <text evidence="3">Belongs to the CRISP family.</text>
</comment>
<reference evidence="6" key="1">
    <citation type="journal article" date="2010" name="Biomed. Res.">
        <title>Molecular diversity in venom proteins of the Russell's viper (Daboia russellii russellii) and the Indian cobra (Naja naja) in Sri Lanka.</title>
        <authorList>
            <person name="Suzuki M."/>
            <person name="Itoh T."/>
            <person name="Bandaranayake B.M.A.I.K."/>
            <person name="Ranasinghe J.G."/>
            <person name="Athauda S.B."/>
            <person name="Moriyama A."/>
        </authorList>
    </citation>
    <scope>PROTEIN SEQUENCE</scope>
    <scope>SUBCELLULAR LOCATION</scope>
    <scope>TISSUE SPECIFICITY</scope>
    <source>
        <tissue evidence="4">Venom</tissue>
    </source>
</reference>
<organism>
    <name type="scientific">Daboia russelii</name>
    <name type="common">Russel's viper</name>
    <name type="synonym">Vipera russelii</name>
    <dbReference type="NCBI Taxonomy" id="8707"/>
    <lineage>
        <taxon>Eukaryota</taxon>
        <taxon>Metazoa</taxon>
        <taxon>Chordata</taxon>
        <taxon>Craniata</taxon>
        <taxon>Vertebrata</taxon>
        <taxon>Euteleostomi</taxon>
        <taxon>Lepidosauria</taxon>
        <taxon>Squamata</taxon>
        <taxon>Bifurcata</taxon>
        <taxon>Unidentata</taxon>
        <taxon>Episquamata</taxon>
        <taxon>Toxicofera</taxon>
        <taxon>Serpentes</taxon>
        <taxon>Colubroidea</taxon>
        <taxon>Viperidae</taxon>
        <taxon>Viperinae</taxon>
        <taxon>Daboia</taxon>
    </lineage>
</organism>
<accession>P86537</accession>
<sequence>SVDFDSESPR</sequence>
<dbReference type="GO" id="GO:0005576">
    <property type="term" value="C:extracellular region"/>
    <property type="evidence" value="ECO:0007669"/>
    <property type="project" value="UniProtKB-SubCell"/>
</dbReference>
<dbReference type="GO" id="GO:0005246">
    <property type="term" value="F:calcium channel regulator activity"/>
    <property type="evidence" value="ECO:0007669"/>
    <property type="project" value="UniProtKB-KW"/>
</dbReference>
<dbReference type="GO" id="GO:0090729">
    <property type="term" value="F:toxin activity"/>
    <property type="evidence" value="ECO:0007669"/>
    <property type="project" value="UniProtKB-KW"/>
</dbReference>
<name>CRVP_DABRR</name>
<proteinExistence type="evidence at protein level"/>
<feature type="chain" id="PRO_0000394724" description="Cysteine-rich venom protein">
    <location>
        <begin position="1"/>
        <end position="10" status="greater than"/>
    </location>
</feature>
<feature type="non-terminal residue" evidence="5">
    <location>
        <position position="10"/>
    </location>
</feature>
<protein>
    <recommendedName>
        <fullName>Cysteine-rich venom protein</fullName>
        <shortName>CRVP</shortName>
    </recommendedName>
    <alternativeName>
        <fullName evidence="5">Cysteine-rich secretory protein</fullName>
        <shortName evidence="5">CRISP</shortName>
    </alternativeName>
</protein>